<name>PHR1_CANAL</name>
<comment type="function">
    <text>Required for apical cell growth and plays an essential role in morphogenesis. May be integral to the pathogenic ability of the organism.</text>
</comment>
<comment type="subcellular location">
    <subcellularLocation>
        <location evidence="4">Cell membrane</location>
        <topology evidence="4">Lipid-anchor</topology>
        <topology evidence="4">GPI-anchor</topology>
    </subcellularLocation>
</comment>
<comment type="induction">
    <text>Strongly expressed under conditions of alkaline pH but not expressed at any pH below 5.5.</text>
</comment>
<comment type="similarity">
    <text evidence="4">Belongs to the glycosyl hydrolase 72 family.</text>
</comment>
<protein>
    <recommendedName>
        <fullName>pH-responsive protein 1</fullName>
    </recommendedName>
    <alternativeName>
        <fullName>pH-regulated protein 1</fullName>
    </alternativeName>
</protein>
<proteinExistence type="evidence at transcript level"/>
<dbReference type="EMBL" id="M90812">
    <property type="protein sequence ID" value="AAA68196.1"/>
    <property type="molecule type" value="Genomic_DNA"/>
</dbReference>
<dbReference type="EMBL" id="CP017626">
    <property type="protein sequence ID" value="AOW29201.1"/>
    <property type="molecule type" value="Genomic_DNA"/>
</dbReference>
<dbReference type="RefSeq" id="XP_717233.2">
    <property type="nucleotide sequence ID" value="XM_712140.2"/>
</dbReference>
<dbReference type="SMR" id="P43076"/>
<dbReference type="BioGRID" id="1224182">
    <property type="interactions" value="2"/>
</dbReference>
<dbReference type="STRING" id="237561.P43076"/>
<dbReference type="CAZy" id="CBM43">
    <property type="family name" value="Carbohydrate-Binding Module Family 43"/>
</dbReference>
<dbReference type="CAZy" id="GH72">
    <property type="family name" value="Glycoside Hydrolase Family 72"/>
</dbReference>
<dbReference type="GlyCosmos" id="P43076">
    <property type="glycosylation" value="3 sites, No reported glycans"/>
</dbReference>
<dbReference type="EnsemblFungi" id="C4_04530C_A-T">
    <property type="protein sequence ID" value="C4_04530C_A-T-p1"/>
    <property type="gene ID" value="C4_04530C_A"/>
</dbReference>
<dbReference type="GeneID" id="3641108"/>
<dbReference type="KEGG" id="cal:CAALFM_C404530CA"/>
<dbReference type="CGD" id="CAL0000177455">
    <property type="gene designation" value="PHR1"/>
</dbReference>
<dbReference type="VEuPathDB" id="FungiDB:C4_04530C_A"/>
<dbReference type="eggNOG" id="ENOG502QPST">
    <property type="taxonomic scope" value="Eukaryota"/>
</dbReference>
<dbReference type="HOGENOM" id="CLU_021855_2_1_1"/>
<dbReference type="InParanoid" id="P43076"/>
<dbReference type="OrthoDB" id="421038at2759"/>
<dbReference type="PHI-base" id="PHI:33"/>
<dbReference type="PRO" id="PR:P43076"/>
<dbReference type="Proteomes" id="UP000000559">
    <property type="component" value="Chromosome 4"/>
</dbReference>
<dbReference type="GO" id="GO:0030428">
    <property type="term" value="C:cell septum"/>
    <property type="evidence" value="ECO:0000314"/>
    <property type="project" value="CGD"/>
</dbReference>
<dbReference type="GO" id="GO:0009986">
    <property type="term" value="C:cell surface"/>
    <property type="evidence" value="ECO:0000314"/>
    <property type="project" value="CGD"/>
</dbReference>
<dbReference type="GO" id="GO:0033101">
    <property type="term" value="C:cellular bud membrane"/>
    <property type="evidence" value="ECO:0000314"/>
    <property type="project" value="CGD"/>
</dbReference>
<dbReference type="GO" id="GO:0005621">
    <property type="term" value="C:cellular bud scar"/>
    <property type="evidence" value="ECO:0000314"/>
    <property type="project" value="CGD"/>
</dbReference>
<dbReference type="GO" id="GO:0005576">
    <property type="term" value="C:extracellular region"/>
    <property type="evidence" value="ECO:0000314"/>
    <property type="project" value="CGD"/>
</dbReference>
<dbReference type="GO" id="GO:1903561">
    <property type="term" value="C:extracellular vesicle"/>
    <property type="evidence" value="ECO:0000314"/>
    <property type="project" value="CGD"/>
</dbReference>
<dbReference type="GO" id="GO:0009277">
    <property type="term" value="C:fungal-type cell wall"/>
    <property type="evidence" value="ECO:0000314"/>
    <property type="project" value="CGD"/>
</dbReference>
<dbReference type="GO" id="GO:0030446">
    <property type="term" value="C:hyphal cell wall"/>
    <property type="evidence" value="ECO:0000314"/>
    <property type="project" value="CGD"/>
</dbReference>
<dbReference type="GO" id="GO:0045121">
    <property type="term" value="C:membrane raft"/>
    <property type="evidence" value="ECO:0000314"/>
    <property type="project" value="CGD"/>
</dbReference>
<dbReference type="GO" id="GO:0005886">
    <property type="term" value="C:plasma membrane"/>
    <property type="evidence" value="ECO:0000314"/>
    <property type="project" value="CGD"/>
</dbReference>
<dbReference type="GO" id="GO:0098552">
    <property type="term" value="C:side of membrane"/>
    <property type="evidence" value="ECO:0007669"/>
    <property type="project" value="UniProtKB-KW"/>
</dbReference>
<dbReference type="GO" id="GO:0030445">
    <property type="term" value="C:yeast-form cell wall"/>
    <property type="evidence" value="ECO:0000314"/>
    <property type="project" value="CGD"/>
</dbReference>
<dbReference type="GO" id="GO:0042124">
    <property type="term" value="F:1,3-beta-glucanosyltransferase activity"/>
    <property type="evidence" value="ECO:0000247"/>
    <property type="project" value="CGD"/>
</dbReference>
<dbReference type="GO" id="GO:0042123">
    <property type="term" value="F:glucanosyltransferase activity"/>
    <property type="evidence" value="ECO:0000314"/>
    <property type="project" value="CGD"/>
</dbReference>
<dbReference type="GO" id="GO:0044406">
    <property type="term" value="P:adhesion of symbiont to host"/>
    <property type="evidence" value="ECO:0000315"/>
    <property type="project" value="CGD"/>
</dbReference>
<dbReference type="GO" id="GO:0051701">
    <property type="term" value="P:biological process involved in interaction with host"/>
    <property type="evidence" value="ECO:0000315"/>
    <property type="project" value="CGD"/>
</dbReference>
<dbReference type="GO" id="GO:0031589">
    <property type="term" value="P:cell-substrate adhesion"/>
    <property type="evidence" value="ECO:0000315"/>
    <property type="project" value="CGD"/>
</dbReference>
<dbReference type="GO" id="GO:0071469">
    <property type="term" value="P:cellular response to alkaline pH"/>
    <property type="evidence" value="ECO:0000315"/>
    <property type="project" value="CGD"/>
</dbReference>
<dbReference type="GO" id="GO:0071277">
    <property type="term" value="P:cellular response to calcium ion"/>
    <property type="evidence" value="ECO:0000315"/>
    <property type="project" value="CGD"/>
</dbReference>
<dbReference type="GO" id="GO:0071467">
    <property type="term" value="P:cellular response to pH"/>
    <property type="evidence" value="ECO:0000315"/>
    <property type="project" value="CGD"/>
</dbReference>
<dbReference type="GO" id="GO:0044114">
    <property type="term" value="P:development of symbiont in host"/>
    <property type="evidence" value="ECO:0000315"/>
    <property type="project" value="CGD"/>
</dbReference>
<dbReference type="GO" id="GO:0030447">
    <property type="term" value="P:filamentous growth"/>
    <property type="evidence" value="ECO:0000315"/>
    <property type="project" value="CGD"/>
</dbReference>
<dbReference type="GO" id="GO:0044182">
    <property type="term" value="P:filamentous growth of a population of unicellular organisms"/>
    <property type="evidence" value="ECO:0000315"/>
    <property type="project" value="CGD"/>
</dbReference>
<dbReference type="GO" id="GO:0071970">
    <property type="term" value="P:fungal-type cell wall (1-&gt;3)-beta-D-glucan biosynthetic process"/>
    <property type="evidence" value="ECO:0000318"/>
    <property type="project" value="GO_Central"/>
</dbReference>
<dbReference type="GO" id="GO:0031505">
    <property type="term" value="P:fungal-type cell wall organization"/>
    <property type="evidence" value="ECO:0000314"/>
    <property type="project" value="CGD"/>
</dbReference>
<dbReference type="GO" id="GO:0044407">
    <property type="term" value="P:single-species biofilm formation in or on host organism"/>
    <property type="evidence" value="ECO:0000315"/>
    <property type="project" value="CGD"/>
</dbReference>
<dbReference type="GO" id="GO:0044011">
    <property type="term" value="P:single-species biofilm formation on inanimate substrate"/>
    <property type="evidence" value="ECO:0000315"/>
    <property type="project" value="CGD"/>
</dbReference>
<dbReference type="GO" id="GO:0044409">
    <property type="term" value="P:symbiont entry into host"/>
    <property type="evidence" value="ECO:0000315"/>
    <property type="project" value="CGD"/>
</dbReference>
<dbReference type="FunFam" id="1.20.58.1040:FF:000011">
    <property type="entry name" value="1,3-beta-glucanosyltransferase"/>
    <property type="match status" value="1"/>
</dbReference>
<dbReference type="FunFam" id="3.20.20.80:FF:000038">
    <property type="entry name" value="1,3-beta-glucanosyltransferase"/>
    <property type="match status" value="1"/>
</dbReference>
<dbReference type="Gene3D" id="1.20.58.1040">
    <property type="match status" value="1"/>
</dbReference>
<dbReference type="Gene3D" id="3.20.20.80">
    <property type="entry name" value="Glycosidases"/>
    <property type="match status" value="1"/>
</dbReference>
<dbReference type="InterPro" id="IPR004886">
    <property type="entry name" value="Glucanosyltransferase"/>
</dbReference>
<dbReference type="InterPro" id="IPR017853">
    <property type="entry name" value="Glycoside_hydrolase_SF"/>
</dbReference>
<dbReference type="InterPro" id="IPR012946">
    <property type="entry name" value="X8"/>
</dbReference>
<dbReference type="PANTHER" id="PTHR31468">
    <property type="entry name" value="1,3-BETA-GLUCANOSYLTRANSFERASE GAS1"/>
    <property type="match status" value="1"/>
</dbReference>
<dbReference type="PANTHER" id="PTHR31468:SF2">
    <property type="entry name" value="1,3-BETA-GLUCANOSYLTRANSFERASE GAS1"/>
    <property type="match status" value="1"/>
</dbReference>
<dbReference type="Pfam" id="PF03198">
    <property type="entry name" value="Glyco_hydro_72"/>
    <property type="match status" value="1"/>
</dbReference>
<dbReference type="Pfam" id="PF07983">
    <property type="entry name" value="X8"/>
    <property type="match status" value="1"/>
</dbReference>
<dbReference type="SMART" id="SM00768">
    <property type="entry name" value="X8"/>
    <property type="match status" value="1"/>
</dbReference>
<dbReference type="SUPFAM" id="SSF51445">
    <property type="entry name" value="(Trans)glycosidases"/>
    <property type="match status" value="1"/>
</dbReference>
<reference key="1">
    <citation type="journal article" date="1995" name="Mol. Cell. Biol.">
        <title>PHR1, a pH-regulated gene of Candida albicans, is required for morphogenesis.</title>
        <authorList>
            <person name="Saporito-Irwin S.M."/>
            <person name="Birse C.E."/>
            <person name="Sypherd P.S."/>
            <person name="Fonzi W.A."/>
        </authorList>
    </citation>
    <scope>NUCLEOTIDE SEQUENCE [GENOMIC DNA]</scope>
    <source>
        <strain>SC5314 / ATCC MYA-2876</strain>
    </source>
</reference>
<reference key="2">
    <citation type="journal article" date="2004" name="Proc. Natl. Acad. Sci. U.S.A.">
        <title>The diploid genome sequence of Candida albicans.</title>
        <authorList>
            <person name="Jones T."/>
            <person name="Federspiel N.A."/>
            <person name="Chibana H."/>
            <person name="Dungan J."/>
            <person name="Kalman S."/>
            <person name="Magee B.B."/>
            <person name="Newport G."/>
            <person name="Thorstenson Y.R."/>
            <person name="Agabian N."/>
            <person name="Magee P.T."/>
            <person name="Davis R.W."/>
            <person name="Scherer S."/>
        </authorList>
    </citation>
    <scope>NUCLEOTIDE SEQUENCE [LARGE SCALE GENOMIC DNA]</scope>
    <source>
        <strain>SC5314 / ATCC MYA-2876</strain>
    </source>
</reference>
<reference key="3">
    <citation type="journal article" date="2007" name="Genome Biol.">
        <title>Assembly of the Candida albicans genome into sixteen supercontigs aligned on the eight chromosomes.</title>
        <authorList>
            <person name="van het Hoog M."/>
            <person name="Rast T.J."/>
            <person name="Martchenko M."/>
            <person name="Grindle S."/>
            <person name="Dignard D."/>
            <person name="Hogues H."/>
            <person name="Cuomo C."/>
            <person name="Berriman M."/>
            <person name="Scherer S."/>
            <person name="Magee B.B."/>
            <person name="Whiteway M."/>
            <person name="Chibana H."/>
            <person name="Nantel A."/>
            <person name="Magee P.T."/>
        </authorList>
    </citation>
    <scope>GENOME REANNOTATION</scope>
    <source>
        <strain>SC5314 / ATCC MYA-2876</strain>
    </source>
</reference>
<reference key="4">
    <citation type="journal article" date="2013" name="Genome Biol.">
        <title>Assembly of a phased diploid Candida albicans genome facilitates allele-specific measurements and provides a simple model for repeat and indel structure.</title>
        <authorList>
            <person name="Muzzey D."/>
            <person name="Schwartz K."/>
            <person name="Weissman J.S."/>
            <person name="Sherlock G."/>
        </authorList>
    </citation>
    <scope>NUCLEOTIDE SEQUENCE [LARGE SCALE GENOMIC DNA]</scope>
    <scope>GENOME REANNOTATION</scope>
    <source>
        <strain>SC5314 / ATCC MYA-2876</strain>
    </source>
</reference>
<keyword id="KW-1003">Cell membrane</keyword>
<keyword id="KW-1015">Disulfide bond</keyword>
<keyword id="KW-0325">Glycoprotein</keyword>
<keyword id="KW-0336">GPI-anchor</keyword>
<keyword id="KW-0449">Lipoprotein</keyword>
<keyword id="KW-0472">Membrane</keyword>
<keyword id="KW-1185">Reference proteome</keyword>
<keyword id="KW-0732">Signal</keyword>
<sequence>MYSLIKSLATFATLFSLTLAKFESSTPPVEVVGNKFYFSNNGSQFLIRGIAYQQDAAGSVSSGYDADPNRKYNDPLADADACKRDVKYFKESNTNTLRVYAIDPDKDHEECMKIFSDAGIYIVADLSEPTVSINRNNPEWNLDLYKRYTKVIDKMQEYSNVLGFFAGNEVTNNRSNTDASAFVKAAIRDMKKYIKESDYRQIPVGYSSNDDEEIRVAIADYFSCGSLDDRADFFGINMYEWCGKSTFETSGYKDRTEEIKNLTIPAFFSEYGCNANRPRLFQEIGTLYSDKMTDVWSGGIVYMYFEEANKYGLVSVDGNSVKTLSDYNNYKSEMNKISPSLAHTSTLSSSDASKTLQCPGTAASTWKAATNLPPTPDESYCDCISKSLECVVADDVDKEDYGDLFGQVCGYIDCSAISADGSKGEYGVASFCSDKDRLSYVLNQYYLDQDKKSSACDFKGSASINSKASASGSCKAVSGVATGKASSSGGSSKSGSSSASASGSSSSSTSSGSSSSSGVKATQQMSMVKLVSIITIVTAFVGGMSVVF</sequence>
<evidence type="ECO:0000250" key="1">
    <source>
        <dbReference type="UniProtKB" id="Q06135"/>
    </source>
</evidence>
<evidence type="ECO:0000255" key="2"/>
<evidence type="ECO:0000256" key="3">
    <source>
        <dbReference type="SAM" id="MobiDB-lite"/>
    </source>
</evidence>
<evidence type="ECO:0000305" key="4"/>
<organism>
    <name type="scientific">Candida albicans (strain SC5314 / ATCC MYA-2876)</name>
    <name type="common">Yeast</name>
    <dbReference type="NCBI Taxonomy" id="237561"/>
    <lineage>
        <taxon>Eukaryota</taxon>
        <taxon>Fungi</taxon>
        <taxon>Dikarya</taxon>
        <taxon>Ascomycota</taxon>
        <taxon>Saccharomycotina</taxon>
        <taxon>Pichiomycetes</taxon>
        <taxon>Debaryomycetaceae</taxon>
        <taxon>Candida/Lodderomyces clade</taxon>
        <taxon>Candida</taxon>
    </lineage>
</organism>
<accession>P43076</accession>
<accession>A0A1D8PM46</accession>
<accession>Q5A661</accession>
<feature type="signal peptide" evidence="2">
    <location>
        <begin position="1"/>
        <end position="20"/>
    </location>
</feature>
<feature type="chain" id="PRO_0000010483" description="pH-responsive protein 1">
    <location>
        <begin position="21"/>
        <end position="517"/>
    </location>
</feature>
<feature type="propeptide" id="PRO_0000010484" description="Removed in mature form" evidence="2">
    <location>
        <begin position="518"/>
        <end position="548"/>
    </location>
</feature>
<feature type="region of interest" description="Disordered" evidence="3">
    <location>
        <begin position="483"/>
        <end position="518"/>
    </location>
</feature>
<feature type="lipid moiety-binding region" description="GPI-anchor amidated serine" evidence="2">
    <location>
        <position position="517"/>
    </location>
</feature>
<feature type="glycosylation site" description="N-linked (GlcNAc...) asparagine" evidence="2">
    <location>
        <position position="41"/>
    </location>
</feature>
<feature type="glycosylation site" description="N-linked (GlcNAc...) asparagine" evidence="2">
    <location>
        <position position="173"/>
    </location>
</feature>
<feature type="glycosylation site" description="N-linked (GlcNAc...) asparagine" evidence="2">
    <location>
        <position position="261"/>
    </location>
</feature>
<feature type="disulfide bond" evidence="1">
    <location>
        <begin position="82"/>
        <end position="111"/>
    </location>
</feature>
<feature type="disulfide bond" evidence="1">
    <location>
        <begin position="224"/>
        <end position="358"/>
    </location>
</feature>
<feature type="disulfide bond" evidence="1">
    <location>
        <begin position="242"/>
        <end position="273"/>
    </location>
</feature>
<feature type="disulfide bond" evidence="1">
    <location>
        <begin position="381"/>
        <end position="432"/>
    </location>
</feature>
<feature type="disulfide bond" evidence="1">
    <location>
        <begin position="390"/>
        <end position="456"/>
    </location>
</feature>
<feature type="disulfide bond" evidence="1">
    <location>
        <begin position="409"/>
        <end position="414"/>
    </location>
</feature>
<feature type="sequence conflict" description="In Ref. 1; AAA68196." evidence="4" ref="1">
    <original>A</original>
    <variation>R</variation>
    <location>
        <position position="79"/>
    </location>
</feature>
<gene>
    <name type="primary">PHR1</name>
    <name type="ordered locus">CAALFM_C404530CA</name>
    <name type="ORF">CaO19.11310</name>
    <name type="ORF">CaO19.3829</name>
</gene>